<dbReference type="EC" id="1.5.1.5" evidence="1"/>
<dbReference type="EC" id="3.5.4.9" evidence="1"/>
<dbReference type="EMBL" id="CP000512">
    <property type="protein sequence ID" value="ABM33034.1"/>
    <property type="molecule type" value="Genomic_DNA"/>
</dbReference>
<dbReference type="RefSeq" id="WP_011795563.1">
    <property type="nucleotide sequence ID" value="NC_008752.1"/>
</dbReference>
<dbReference type="SMR" id="A1TPZ6"/>
<dbReference type="STRING" id="397945.Aave_2459"/>
<dbReference type="GeneID" id="79792034"/>
<dbReference type="KEGG" id="aav:Aave_2459"/>
<dbReference type="eggNOG" id="COG0190">
    <property type="taxonomic scope" value="Bacteria"/>
</dbReference>
<dbReference type="HOGENOM" id="CLU_034045_2_1_4"/>
<dbReference type="OrthoDB" id="9803580at2"/>
<dbReference type="UniPathway" id="UPA00193"/>
<dbReference type="Proteomes" id="UP000002596">
    <property type="component" value="Chromosome"/>
</dbReference>
<dbReference type="GO" id="GO:0005829">
    <property type="term" value="C:cytosol"/>
    <property type="evidence" value="ECO:0007669"/>
    <property type="project" value="TreeGrafter"/>
</dbReference>
<dbReference type="GO" id="GO:0004477">
    <property type="term" value="F:methenyltetrahydrofolate cyclohydrolase activity"/>
    <property type="evidence" value="ECO:0007669"/>
    <property type="project" value="UniProtKB-UniRule"/>
</dbReference>
<dbReference type="GO" id="GO:0004488">
    <property type="term" value="F:methylenetetrahydrofolate dehydrogenase (NADP+) activity"/>
    <property type="evidence" value="ECO:0007669"/>
    <property type="project" value="UniProtKB-UniRule"/>
</dbReference>
<dbReference type="GO" id="GO:0000105">
    <property type="term" value="P:L-histidine biosynthetic process"/>
    <property type="evidence" value="ECO:0007669"/>
    <property type="project" value="UniProtKB-KW"/>
</dbReference>
<dbReference type="GO" id="GO:0009086">
    <property type="term" value="P:methionine biosynthetic process"/>
    <property type="evidence" value="ECO:0007669"/>
    <property type="project" value="UniProtKB-KW"/>
</dbReference>
<dbReference type="GO" id="GO:0006164">
    <property type="term" value="P:purine nucleotide biosynthetic process"/>
    <property type="evidence" value="ECO:0007669"/>
    <property type="project" value="UniProtKB-KW"/>
</dbReference>
<dbReference type="GO" id="GO:0035999">
    <property type="term" value="P:tetrahydrofolate interconversion"/>
    <property type="evidence" value="ECO:0007669"/>
    <property type="project" value="UniProtKB-UniRule"/>
</dbReference>
<dbReference type="CDD" id="cd01080">
    <property type="entry name" value="NAD_bind_m-THF_DH_Cyclohyd"/>
    <property type="match status" value="1"/>
</dbReference>
<dbReference type="FunFam" id="3.40.50.720:FF:000094">
    <property type="entry name" value="Bifunctional protein FolD"/>
    <property type="match status" value="1"/>
</dbReference>
<dbReference type="FunFam" id="3.40.50.10860:FF:000005">
    <property type="entry name" value="C-1-tetrahydrofolate synthase, cytoplasmic, putative"/>
    <property type="match status" value="1"/>
</dbReference>
<dbReference type="Gene3D" id="3.40.50.10860">
    <property type="entry name" value="Leucine Dehydrogenase, chain A, domain 1"/>
    <property type="match status" value="1"/>
</dbReference>
<dbReference type="Gene3D" id="3.40.50.720">
    <property type="entry name" value="NAD(P)-binding Rossmann-like Domain"/>
    <property type="match status" value="1"/>
</dbReference>
<dbReference type="HAMAP" id="MF_01576">
    <property type="entry name" value="THF_DHG_CYH"/>
    <property type="match status" value="1"/>
</dbReference>
<dbReference type="InterPro" id="IPR046346">
    <property type="entry name" value="Aminoacid_DH-like_N_sf"/>
</dbReference>
<dbReference type="InterPro" id="IPR036291">
    <property type="entry name" value="NAD(P)-bd_dom_sf"/>
</dbReference>
<dbReference type="InterPro" id="IPR000672">
    <property type="entry name" value="THF_DH/CycHdrlase"/>
</dbReference>
<dbReference type="InterPro" id="IPR020630">
    <property type="entry name" value="THF_DH/CycHdrlase_cat_dom"/>
</dbReference>
<dbReference type="InterPro" id="IPR020867">
    <property type="entry name" value="THF_DH/CycHdrlase_CS"/>
</dbReference>
<dbReference type="InterPro" id="IPR020631">
    <property type="entry name" value="THF_DH/CycHdrlase_NAD-bd_dom"/>
</dbReference>
<dbReference type="NCBIfam" id="NF008058">
    <property type="entry name" value="PRK10792.1"/>
    <property type="match status" value="1"/>
</dbReference>
<dbReference type="NCBIfam" id="NF010783">
    <property type="entry name" value="PRK14186.1"/>
    <property type="match status" value="1"/>
</dbReference>
<dbReference type="NCBIfam" id="NF010786">
    <property type="entry name" value="PRK14189.1"/>
    <property type="match status" value="1"/>
</dbReference>
<dbReference type="PANTHER" id="PTHR48099:SF5">
    <property type="entry name" value="C-1-TETRAHYDROFOLATE SYNTHASE, CYTOPLASMIC"/>
    <property type="match status" value="1"/>
</dbReference>
<dbReference type="PANTHER" id="PTHR48099">
    <property type="entry name" value="C-1-TETRAHYDROFOLATE SYNTHASE, CYTOPLASMIC-RELATED"/>
    <property type="match status" value="1"/>
</dbReference>
<dbReference type="Pfam" id="PF00763">
    <property type="entry name" value="THF_DHG_CYH"/>
    <property type="match status" value="1"/>
</dbReference>
<dbReference type="Pfam" id="PF02882">
    <property type="entry name" value="THF_DHG_CYH_C"/>
    <property type="match status" value="1"/>
</dbReference>
<dbReference type="PRINTS" id="PR00085">
    <property type="entry name" value="THFDHDRGNASE"/>
</dbReference>
<dbReference type="SUPFAM" id="SSF53223">
    <property type="entry name" value="Aminoacid dehydrogenase-like, N-terminal domain"/>
    <property type="match status" value="1"/>
</dbReference>
<dbReference type="SUPFAM" id="SSF51735">
    <property type="entry name" value="NAD(P)-binding Rossmann-fold domains"/>
    <property type="match status" value="1"/>
</dbReference>
<dbReference type="PROSITE" id="PS00766">
    <property type="entry name" value="THF_DHG_CYH_1"/>
    <property type="match status" value="1"/>
</dbReference>
<dbReference type="PROSITE" id="PS00767">
    <property type="entry name" value="THF_DHG_CYH_2"/>
    <property type="match status" value="1"/>
</dbReference>
<organism>
    <name type="scientific">Paracidovorax citrulli (strain AAC00-1)</name>
    <name type="common">Acidovorax citrulli</name>
    <dbReference type="NCBI Taxonomy" id="397945"/>
    <lineage>
        <taxon>Bacteria</taxon>
        <taxon>Pseudomonadati</taxon>
        <taxon>Pseudomonadota</taxon>
        <taxon>Betaproteobacteria</taxon>
        <taxon>Burkholderiales</taxon>
        <taxon>Comamonadaceae</taxon>
        <taxon>Paracidovorax</taxon>
    </lineage>
</organism>
<sequence length="283" mass="29882">MTAQLIDGNALSRQLRADVARRAALLKERGTTPGLAVVLVGDNPASQVYVRNKVKACEESGLHSVLEKYDAAMSEAELLARVDALNNDPSIHGILVQLPLPAHIDAQKVIEAISPAKDVDGFHIASAGALMTGMPGFWPCTPYGCMKMLEHIGYDLRGKHAVVIGRSNIVGKPMALMLLAKDATVTVCHSRTADLKAQTLQADVIVAAVGRRNVLTADMVKPGAVVIDVGMNRNDEGRLCGDVDFDGVREVAGHITPVPGGVGPMTITMLLVNTLEAAERAAG</sequence>
<comment type="function">
    <text evidence="1">Catalyzes the oxidation of 5,10-methylenetetrahydrofolate to 5,10-methenyltetrahydrofolate and then the hydrolysis of 5,10-methenyltetrahydrofolate to 10-formyltetrahydrofolate.</text>
</comment>
<comment type="catalytic activity">
    <reaction evidence="1">
        <text>(6R)-5,10-methylene-5,6,7,8-tetrahydrofolate + NADP(+) = (6R)-5,10-methenyltetrahydrofolate + NADPH</text>
        <dbReference type="Rhea" id="RHEA:22812"/>
        <dbReference type="ChEBI" id="CHEBI:15636"/>
        <dbReference type="ChEBI" id="CHEBI:57455"/>
        <dbReference type="ChEBI" id="CHEBI:57783"/>
        <dbReference type="ChEBI" id="CHEBI:58349"/>
        <dbReference type="EC" id="1.5.1.5"/>
    </reaction>
</comment>
<comment type="catalytic activity">
    <reaction evidence="1">
        <text>(6R)-5,10-methenyltetrahydrofolate + H2O = (6R)-10-formyltetrahydrofolate + H(+)</text>
        <dbReference type="Rhea" id="RHEA:23700"/>
        <dbReference type="ChEBI" id="CHEBI:15377"/>
        <dbReference type="ChEBI" id="CHEBI:15378"/>
        <dbReference type="ChEBI" id="CHEBI:57455"/>
        <dbReference type="ChEBI" id="CHEBI:195366"/>
        <dbReference type="EC" id="3.5.4.9"/>
    </reaction>
</comment>
<comment type="pathway">
    <text evidence="1">One-carbon metabolism; tetrahydrofolate interconversion.</text>
</comment>
<comment type="subunit">
    <text evidence="1">Homodimer.</text>
</comment>
<comment type="similarity">
    <text evidence="1">Belongs to the tetrahydrofolate dehydrogenase/cyclohydrolase family.</text>
</comment>
<name>FOLD_PARC0</name>
<accession>A1TPZ6</accession>
<reference key="1">
    <citation type="submission" date="2006-12" db="EMBL/GenBank/DDBJ databases">
        <title>Complete sequence of Acidovorax avenae subsp. citrulli AAC00-1.</title>
        <authorList>
            <person name="Copeland A."/>
            <person name="Lucas S."/>
            <person name="Lapidus A."/>
            <person name="Barry K."/>
            <person name="Detter J.C."/>
            <person name="Glavina del Rio T."/>
            <person name="Dalin E."/>
            <person name="Tice H."/>
            <person name="Pitluck S."/>
            <person name="Kiss H."/>
            <person name="Brettin T."/>
            <person name="Bruce D."/>
            <person name="Han C."/>
            <person name="Tapia R."/>
            <person name="Gilna P."/>
            <person name="Schmutz J."/>
            <person name="Larimer F."/>
            <person name="Land M."/>
            <person name="Hauser L."/>
            <person name="Kyrpides N."/>
            <person name="Kim E."/>
            <person name="Stahl D."/>
            <person name="Richardson P."/>
        </authorList>
    </citation>
    <scope>NUCLEOTIDE SEQUENCE [LARGE SCALE GENOMIC DNA]</scope>
    <source>
        <strain>AAC00-1</strain>
    </source>
</reference>
<feature type="chain" id="PRO_0000305784" description="Bifunctional protein FolD">
    <location>
        <begin position="1"/>
        <end position="283"/>
    </location>
</feature>
<feature type="binding site" evidence="1">
    <location>
        <begin position="165"/>
        <end position="167"/>
    </location>
    <ligand>
        <name>NADP(+)</name>
        <dbReference type="ChEBI" id="CHEBI:58349"/>
    </ligand>
</feature>
<feature type="binding site" evidence="1">
    <location>
        <position position="190"/>
    </location>
    <ligand>
        <name>NADP(+)</name>
        <dbReference type="ChEBI" id="CHEBI:58349"/>
    </ligand>
</feature>
<protein>
    <recommendedName>
        <fullName evidence="1">Bifunctional protein FolD</fullName>
    </recommendedName>
    <domain>
        <recommendedName>
            <fullName evidence="1">Methylenetetrahydrofolate dehydrogenase</fullName>
            <ecNumber evidence="1">1.5.1.5</ecNumber>
        </recommendedName>
    </domain>
    <domain>
        <recommendedName>
            <fullName evidence="1">Methenyltetrahydrofolate cyclohydrolase</fullName>
            <ecNumber evidence="1">3.5.4.9</ecNumber>
        </recommendedName>
    </domain>
</protein>
<proteinExistence type="inferred from homology"/>
<gene>
    <name evidence="1" type="primary">folD</name>
    <name type="ordered locus">Aave_2459</name>
</gene>
<keyword id="KW-0028">Amino-acid biosynthesis</keyword>
<keyword id="KW-0368">Histidine biosynthesis</keyword>
<keyword id="KW-0378">Hydrolase</keyword>
<keyword id="KW-0486">Methionine biosynthesis</keyword>
<keyword id="KW-0511">Multifunctional enzyme</keyword>
<keyword id="KW-0521">NADP</keyword>
<keyword id="KW-0554">One-carbon metabolism</keyword>
<keyword id="KW-0560">Oxidoreductase</keyword>
<keyword id="KW-0658">Purine biosynthesis</keyword>
<evidence type="ECO:0000255" key="1">
    <source>
        <dbReference type="HAMAP-Rule" id="MF_01576"/>
    </source>
</evidence>